<protein>
    <recommendedName>
        <fullName>Pardaxin P-2</fullName>
    </recommendedName>
    <alternativeName>
        <fullName>Pardaxin Pa2</fullName>
    </alternativeName>
</protein>
<dbReference type="PIR" id="B60907">
    <property type="entry name" value="B60907"/>
</dbReference>
<dbReference type="GO" id="GO:0005576">
    <property type="term" value="C:extracellular region"/>
    <property type="evidence" value="ECO:0007669"/>
    <property type="project" value="UniProtKB-SubCell"/>
</dbReference>
<dbReference type="GO" id="GO:0016020">
    <property type="term" value="C:membrane"/>
    <property type="evidence" value="ECO:0007669"/>
    <property type="project" value="UniProtKB-KW"/>
</dbReference>
<dbReference type="GO" id="GO:0044218">
    <property type="term" value="C:other organism cell membrane"/>
    <property type="evidence" value="ECO:0007669"/>
    <property type="project" value="UniProtKB-KW"/>
</dbReference>
<dbReference type="GO" id="GO:0090729">
    <property type="term" value="F:toxin activity"/>
    <property type="evidence" value="ECO:0007669"/>
    <property type="project" value="UniProtKB-KW"/>
</dbReference>
<dbReference type="GO" id="GO:0006811">
    <property type="term" value="P:monoatomic ion transport"/>
    <property type="evidence" value="ECO:0007669"/>
    <property type="project" value="UniProtKB-KW"/>
</dbReference>
<dbReference type="InterPro" id="IPR009990">
    <property type="entry name" value="Pardaxin"/>
</dbReference>
<dbReference type="Pfam" id="PF07425">
    <property type="entry name" value="Pardaxin"/>
    <property type="match status" value="1"/>
</dbReference>
<dbReference type="PIRSF" id="PIRSF037561">
    <property type="entry name" value="Pardaxin"/>
    <property type="match status" value="1"/>
</dbReference>
<accession>P23067</accession>
<keyword id="KW-0903">Direct protein sequencing</keyword>
<keyword id="KW-0406">Ion transport</keyword>
<keyword id="KW-0472">Membrane</keyword>
<keyword id="KW-0964">Secreted</keyword>
<keyword id="KW-1052">Target cell membrane</keyword>
<keyword id="KW-1053">Target membrane</keyword>
<keyword id="KW-0800">Toxin</keyword>
<keyword id="KW-0812">Transmembrane</keyword>
<keyword id="KW-0813">Transport</keyword>
<evidence type="ECO:0000305" key="1"/>
<feature type="peptide" id="PRO_0000044783" description="Pardaxin P-2">
    <location>
        <begin position="1"/>
        <end position="33"/>
    </location>
</feature>
<organism>
    <name type="scientific">Pardachirus pavoninus</name>
    <name type="common">Peacock sole</name>
    <name type="synonym">Achirus pavoninus</name>
    <dbReference type="NCBI Taxonomy" id="8286"/>
    <lineage>
        <taxon>Eukaryota</taxon>
        <taxon>Metazoa</taxon>
        <taxon>Chordata</taxon>
        <taxon>Craniata</taxon>
        <taxon>Vertebrata</taxon>
        <taxon>Euteleostomi</taxon>
        <taxon>Actinopterygii</taxon>
        <taxon>Neopterygii</taxon>
        <taxon>Teleostei</taxon>
        <taxon>Neoteleostei</taxon>
        <taxon>Acanthomorphata</taxon>
        <taxon>Carangaria</taxon>
        <taxon>Pleuronectiformes</taxon>
        <taxon>Pleuronectoidei</taxon>
        <taxon>Soleidae</taxon>
        <taxon>Pardachirus</taxon>
    </lineage>
</organism>
<proteinExistence type="evidence at protein level"/>
<sequence>GFFALIPKIISSPIFKTLLSAVGSALSSSGGQE</sequence>
<comment type="function">
    <text>Exhibits unusual shark repellent and surfactant properties. Forms voltage-dependent, ion-permeable channels in membranes. At high concentration causes cell membrane lysis.</text>
</comment>
<comment type="subunit">
    <text>In aqueous solution exists as a tetramer.</text>
</comment>
<comment type="subcellular location">
    <subcellularLocation>
        <location>Secreted</location>
    </subcellularLocation>
    <subcellularLocation>
        <location>Target cell membrane</location>
    </subcellularLocation>
    <text>Forms a helical membrane channel in the prey.</text>
</comment>
<comment type="domain">
    <text>Consists of a C-terminal hydrophilic region and a predominantly hydrophobic remainder.</text>
</comment>
<comment type="similarity">
    <text evidence="1">Belongs to the pardaxin family.</text>
</comment>
<reference key="1">
    <citation type="journal article" date="1986" name="Science">
        <title>Melittin-like peptides from the shark-repelling defense secretion of the sole Pardachirus pavoninus.</title>
        <authorList>
            <person name="Thompson S.A."/>
            <person name="Tachibana K."/>
            <person name="Nakanishi K."/>
            <person name="Kubota I."/>
        </authorList>
    </citation>
    <scope>PROTEIN SEQUENCE</scope>
</reference>
<reference key="2">
    <citation type="journal article" date="1991" name="Biochemistry">
        <title>Solution structure of pardaxin P-2.</title>
        <authorList>
            <person name="Zagorski M.G."/>
            <person name="Norman D.G."/>
            <person name="Barrow C.J."/>
            <person name="Iwashita T."/>
            <person name="Tachibana K."/>
            <person name="Patel D.J."/>
        </authorList>
    </citation>
    <scope>STRUCTURE BY NMR</scope>
</reference>
<name>PAP2_PARPV</name>